<gene>
    <name type="primary">ndhF</name>
</gene>
<comment type="function">
    <text evidence="1">NDH shuttles electrons from NAD(P)H:plastoquinone, via FMN and iron-sulfur (Fe-S) centers, to quinones in the photosynthetic chain and possibly in a chloroplast respiratory chain. The immediate electron acceptor for the enzyme in this species is believed to be plastoquinone. Couples the redox reaction to proton translocation, and thus conserves the redox energy in a proton gradient (By similarity).</text>
</comment>
<comment type="catalytic activity">
    <reaction>
        <text>a plastoquinone + NADH + (n+1) H(+)(in) = a plastoquinol + NAD(+) + n H(+)(out)</text>
        <dbReference type="Rhea" id="RHEA:42608"/>
        <dbReference type="Rhea" id="RHEA-COMP:9561"/>
        <dbReference type="Rhea" id="RHEA-COMP:9562"/>
        <dbReference type="ChEBI" id="CHEBI:15378"/>
        <dbReference type="ChEBI" id="CHEBI:17757"/>
        <dbReference type="ChEBI" id="CHEBI:57540"/>
        <dbReference type="ChEBI" id="CHEBI:57945"/>
        <dbReference type="ChEBI" id="CHEBI:62192"/>
    </reaction>
</comment>
<comment type="catalytic activity">
    <reaction>
        <text>a plastoquinone + NADPH + (n+1) H(+)(in) = a plastoquinol + NADP(+) + n H(+)(out)</text>
        <dbReference type="Rhea" id="RHEA:42612"/>
        <dbReference type="Rhea" id="RHEA-COMP:9561"/>
        <dbReference type="Rhea" id="RHEA-COMP:9562"/>
        <dbReference type="ChEBI" id="CHEBI:15378"/>
        <dbReference type="ChEBI" id="CHEBI:17757"/>
        <dbReference type="ChEBI" id="CHEBI:57783"/>
        <dbReference type="ChEBI" id="CHEBI:58349"/>
        <dbReference type="ChEBI" id="CHEBI:62192"/>
    </reaction>
</comment>
<comment type="subunit">
    <text evidence="1">NDH is composed of at least 16 different subunits, 5 of which are encoded in the nucleus.</text>
</comment>
<comment type="subcellular location">
    <subcellularLocation>
        <location evidence="1">Plastid</location>
        <location evidence="1">Chloroplast thylakoid membrane</location>
        <topology evidence="1">Multi-pass membrane protein</topology>
    </subcellularLocation>
</comment>
<comment type="similarity">
    <text evidence="3">Belongs to the complex I subunit 5 family.</text>
</comment>
<name>NU5C_AMBTC</name>
<proteinExistence type="inferred from homology"/>
<protein>
    <recommendedName>
        <fullName>NAD(P)H-quinone oxidoreductase subunit 5, chloroplastic</fullName>
        <ecNumber>7.1.1.-</ecNumber>
    </recommendedName>
    <alternativeName>
        <fullName>NAD(P)H dehydrogenase subunit 5</fullName>
    </alternativeName>
    <alternativeName>
        <fullName>NADH-plastoquinone oxidoreductase subunit 5</fullName>
    </alternativeName>
</protein>
<keyword id="KW-0150">Chloroplast</keyword>
<keyword id="KW-0472">Membrane</keyword>
<keyword id="KW-0520">NAD</keyword>
<keyword id="KW-0521">NADP</keyword>
<keyword id="KW-0934">Plastid</keyword>
<keyword id="KW-0618">Plastoquinone</keyword>
<keyword id="KW-0874">Quinone</keyword>
<keyword id="KW-1185">Reference proteome</keyword>
<keyword id="KW-0793">Thylakoid</keyword>
<keyword id="KW-1278">Translocase</keyword>
<keyword id="KW-0812">Transmembrane</keyword>
<keyword id="KW-1133">Transmembrane helix</keyword>
<keyword id="KW-0813">Transport</keyword>
<sequence>MERTYQYAWIIPFLTLAVPILIGLGLLLVPPATKSIRRIWAFPSVLLLSIVMVFSTNLSIQQINGNSIYQYLWSWTINSDSSLEFGYLIDSLTSIMSILIATVGMMVLIYSDNYMSHDKGYLRFFAYMSFFNTSMLGLVISPNLIQIYIFWELVGMCSYLSIGFWFTRPSAANACQKAFVTNRVGDFGLLLGILGLYWIAGSFEFRDLFDIFNDSIDNIDNNVLNSSFAILCASLLFLGAVAKSAQFPLHVWLPDAMEGPTPISALIHAATMVAAGIFLVARLLPLLTVIPYIMNLISLIGVITVLLGATLALAQKDIKRSLAYSTMSQLGYIMLASGIGSYRAALFHSITHAYSKALLFLGSGSIIHSMEPILGYSPDKSQNMVFMGGLSKYVPITKATFLLGTLSLCGIPPLACFWSKDEILNNSWLYSPIFAIIASSTTGLTAFYMFRMYLLTFEGHLRVHFKGDTNSSLYSISIWGKEGPEVFSRNLILLSMNNNQNEKVSSFLNKNKIYQIDRDVIKMRSFSTHFVKKETFPYPHESDNTMLFPLLLLAILTLFVGSVGIRFGQGVTDFDVLSKWLIPSISMDLFHEYLNPSADWYEFAQNAIYSVSIAFFGILIANLLYGSVHSSFQNLDLINSFAKIYTKIRIFSDQALNVIYNWSYNRGYIDLYYATILTRGIRGLAESTHFFDQRIIDGVTNAVGITNFFVGEAIKYMAGGRISSYLFFSLSSLSIALILVYFYLYF</sequence>
<dbReference type="EC" id="7.1.1.-"/>
<dbReference type="EMBL" id="AJ506156">
    <property type="protein sequence ID" value="CAD45154.1"/>
    <property type="molecule type" value="Genomic_DNA"/>
</dbReference>
<dbReference type="RefSeq" id="NP_904146.1">
    <property type="nucleotide sequence ID" value="NC_005086.1"/>
</dbReference>
<dbReference type="SMR" id="Q70XW6"/>
<dbReference type="STRING" id="13333.Q70XW6"/>
<dbReference type="GeneID" id="2546604"/>
<dbReference type="KEGG" id="atr:2546604"/>
<dbReference type="OrthoDB" id="543408at2759"/>
<dbReference type="Proteomes" id="UP000017836">
    <property type="component" value="Chloroplast"/>
</dbReference>
<dbReference type="GO" id="GO:0009535">
    <property type="term" value="C:chloroplast thylakoid membrane"/>
    <property type="evidence" value="ECO:0007669"/>
    <property type="project" value="UniProtKB-SubCell"/>
</dbReference>
<dbReference type="GO" id="GO:0008137">
    <property type="term" value="F:NADH dehydrogenase (ubiquinone) activity"/>
    <property type="evidence" value="ECO:0007669"/>
    <property type="project" value="InterPro"/>
</dbReference>
<dbReference type="GO" id="GO:0048038">
    <property type="term" value="F:quinone binding"/>
    <property type="evidence" value="ECO:0007669"/>
    <property type="project" value="UniProtKB-KW"/>
</dbReference>
<dbReference type="GO" id="GO:0042773">
    <property type="term" value="P:ATP synthesis coupled electron transport"/>
    <property type="evidence" value="ECO:0007669"/>
    <property type="project" value="InterPro"/>
</dbReference>
<dbReference type="GO" id="GO:0015990">
    <property type="term" value="P:electron transport coupled proton transport"/>
    <property type="evidence" value="ECO:0000318"/>
    <property type="project" value="GO_Central"/>
</dbReference>
<dbReference type="Gene3D" id="1.20.5.2700">
    <property type="match status" value="1"/>
</dbReference>
<dbReference type="InterPro" id="IPR002128">
    <property type="entry name" value="NADH_UbQ_OxRdtase_chlpt_su5_C"/>
</dbReference>
<dbReference type="InterPro" id="IPR018393">
    <property type="entry name" value="NADHpl_OxRdtase_5_subgr"/>
</dbReference>
<dbReference type="InterPro" id="IPR001750">
    <property type="entry name" value="ND/Mrp_TM"/>
</dbReference>
<dbReference type="InterPro" id="IPR003945">
    <property type="entry name" value="NU5C-like"/>
</dbReference>
<dbReference type="InterPro" id="IPR001516">
    <property type="entry name" value="Proton_antipo_N"/>
</dbReference>
<dbReference type="NCBIfam" id="TIGR01974">
    <property type="entry name" value="NDH_I_L"/>
    <property type="match status" value="1"/>
</dbReference>
<dbReference type="NCBIfam" id="NF005141">
    <property type="entry name" value="PRK06590.1"/>
    <property type="match status" value="1"/>
</dbReference>
<dbReference type="PANTHER" id="PTHR42829">
    <property type="entry name" value="NADH-UBIQUINONE OXIDOREDUCTASE CHAIN 5"/>
    <property type="match status" value="1"/>
</dbReference>
<dbReference type="PANTHER" id="PTHR42829:SF2">
    <property type="entry name" value="NADH-UBIQUINONE OXIDOREDUCTASE CHAIN 5"/>
    <property type="match status" value="1"/>
</dbReference>
<dbReference type="Pfam" id="PF01010">
    <property type="entry name" value="Proton_antipo_C"/>
    <property type="match status" value="1"/>
</dbReference>
<dbReference type="Pfam" id="PF00361">
    <property type="entry name" value="Proton_antipo_M"/>
    <property type="match status" value="1"/>
</dbReference>
<dbReference type="Pfam" id="PF00662">
    <property type="entry name" value="Proton_antipo_N"/>
    <property type="match status" value="1"/>
</dbReference>
<dbReference type="PRINTS" id="PR01434">
    <property type="entry name" value="NADHDHGNASE5"/>
</dbReference>
<dbReference type="PRINTS" id="PR01435">
    <property type="entry name" value="NPOXDRDTASE5"/>
</dbReference>
<accession>Q70XW6</accession>
<geneLocation type="chloroplast"/>
<evidence type="ECO:0000250" key="1"/>
<evidence type="ECO:0000255" key="2"/>
<evidence type="ECO:0000305" key="3"/>
<feature type="chain" id="PRO_0000360909" description="NAD(P)H-quinone oxidoreductase subunit 5, chloroplastic">
    <location>
        <begin position="1"/>
        <end position="746"/>
    </location>
</feature>
<feature type="transmembrane region" description="Helical" evidence="2">
    <location>
        <begin position="9"/>
        <end position="29"/>
    </location>
</feature>
<feature type="transmembrane region" description="Helical" evidence="2">
    <location>
        <begin position="39"/>
        <end position="59"/>
    </location>
</feature>
<feature type="transmembrane region" description="Helical" evidence="2">
    <location>
        <begin position="89"/>
        <end position="109"/>
    </location>
</feature>
<feature type="transmembrane region" description="Helical" evidence="2">
    <location>
        <begin position="125"/>
        <end position="145"/>
    </location>
</feature>
<feature type="transmembrane region" description="Helical" evidence="2">
    <location>
        <begin position="147"/>
        <end position="167"/>
    </location>
</feature>
<feature type="transmembrane region" description="Helical" evidence="2">
    <location>
        <begin position="185"/>
        <end position="205"/>
    </location>
</feature>
<feature type="transmembrane region" description="Helical" evidence="2">
    <location>
        <begin position="222"/>
        <end position="242"/>
    </location>
</feature>
<feature type="transmembrane region" description="Helical" evidence="2">
    <location>
        <begin position="261"/>
        <end position="281"/>
    </location>
</feature>
<feature type="transmembrane region" description="Helical" evidence="2">
    <location>
        <begin position="283"/>
        <end position="303"/>
    </location>
</feature>
<feature type="transmembrane region" description="Helical" evidence="2">
    <location>
        <begin position="330"/>
        <end position="350"/>
    </location>
</feature>
<feature type="transmembrane region" description="Helical" evidence="2">
    <location>
        <begin position="357"/>
        <end position="377"/>
    </location>
</feature>
<feature type="transmembrane region" description="Helical" evidence="2">
    <location>
        <begin position="399"/>
        <end position="419"/>
    </location>
</feature>
<feature type="transmembrane region" description="Helical" evidence="2">
    <location>
        <begin position="428"/>
        <end position="448"/>
    </location>
</feature>
<feature type="transmembrane region" description="Helical" evidence="2">
    <location>
        <begin position="545"/>
        <end position="565"/>
    </location>
</feature>
<feature type="transmembrane region" description="Helical" evidence="2">
    <location>
        <begin position="608"/>
        <end position="628"/>
    </location>
</feature>
<feature type="transmembrane region" description="Helical" evidence="2">
    <location>
        <begin position="726"/>
        <end position="746"/>
    </location>
</feature>
<reference key="1">
    <citation type="journal article" date="2003" name="Mol. Biol. Evol.">
        <title>Analysis of the Amborella trichopoda chloroplast genome sequence suggests that Amborella is not a basal angiosperm.</title>
        <authorList>
            <person name="Goremykin V.V."/>
            <person name="Hirsch-Ernst K.I."/>
            <person name="Wolfl S."/>
            <person name="Hellwig F.H."/>
        </authorList>
    </citation>
    <scope>NUCLEOTIDE SEQUENCE [LARGE SCALE GENOMIC DNA]</scope>
</reference>
<organism>
    <name type="scientific">Amborella trichopoda</name>
    <dbReference type="NCBI Taxonomy" id="13333"/>
    <lineage>
        <taxon>Eukaryota</taxon>
        <taxon>Viridiplantae</taxon>
        <taxon>Streptophyta</taxon>
        <taxon>Embryophyta</taxon>
        <taxon>Tracheophyta</taxon>
        <taxon>Spermatophyta</taxon>
        <taxon>Magnoliopsida</taxon>
        <taxon>Amborellales</taxon>
        <taxon>Amborellaceae</taxon>
        <taxon>Amborella</taxon>
    </lineage>
</organism>